<protein>
    <recommendedName>
        <fullName>UPF0758 protein VS_0182</fullName>
    </recommendedName>
</protein>
<comment type="similarity">
    <text evidence="3">Belongs to the UPF0758 family.</text>
</comment>
<organism>
    <name type="scientific">Vibrio atlanticus (strain LGP32)</name>
    <name type="common">Vibrio splendidus (strain Mel32)</name>
    <dbReference type="NCBI Taxonomy" id="575788"/>
    <lineage>
        <taxon>Bacteria</taxon>
        <taxon>Pseudomonadati</taxon>
        <taxon>Pseudomonadota</taxon>
        <taxon>Gammaproteobacteria</taxon>
        <taxon>Vibrionales</taxon>
        <taxon>Vibrionaceae</taxon>
        <taxon>Vibrio</taxon>
    </lineage>
</organism>
<name>Y182_VIBA3</name>
<sequence length="224" mass="25116">MPISKMPVESMPREKLLSRGPDSLSDAELLAIFLRTGTQGMNVLELSDKLIKDFGSLRHLFSATEAEFCAHKGMGQAKYVQLQAVLEMTQRYLAETLSRGDALTSPSHTKLYLSSILRDRQREAFYILFLDNQNRVIKDEVMFEGTIDAASVYPREVVKRALHHNAAALILAHNHPSGVAEPSQADRRITRRLTDALALVDIRILDHFVVGDGEVISFAERGWI</sequence>
<evidence type="ECO:0000255" key="1">
    <source>
        <dbReference type="PROSITE-ProRule" id="PRU01182"/>
    </source>
</evidence>
<evidence type="ECO:0000256" key="2">
    <source>
        <dbReference type="SAM" id="MobiDB-lite"/>
    </source>
</evidence>
<evidence type="ECO:0000305" key="3"/>
<reference key="1">
    <citation type="submission" date="2009-02" db="EMBL/GenBank/DDBJ databases">
        <title>Vibrio splendidus str. LGP32 complete genome.</title>
        <authorList>
            <person name="Mazel D."/>
            <person name="Le Roux F."/>
        </authorList>
    </citation>
    <scope>NUCLEOTIDE SEQUENCE [LARGE SCALE GENOMIC DNA]</scope>
    <source>
        <strain>LGP32</strain>
    </source>
</reference>
<dbReference type="EMBL" id="FM954972">
    <property type="protein sequence ID" value="CAV17214.1"/>
    <property type="molecule type" value="Genomic_DNA"/>
</dbReference>
<dbReference type="SMR" id="B7VHK2"/>
<dbReference type="STRING" id="575788.VS_0182"/>
<dbReference type="KEGG" id="vsp:VS_0182"/>
<dbReference type="PATRIC" id="fig|575788.5.peg.1570"/>
<dbReference type="eggNOG" id="COG2003">
    <property type="taxonomic scope" value="Bacteria"/>
</dbReference>
<dbReference type="HOGENOM" id="CLU_073529_0_1_6"/>
<dbReference type="Proteomes" id="UP000009100">
    <property type="component" value="Chromosome 1"/>
</dbReference>
<dbReference type="GO" id="GO:0046872">
    <property type="term" value="F:metal ion binding"/>
    <property type="evidence" value="ECO:0007669"/>
    <property type="project" value="UniProtKB-KW"/>
</dbReference>
<dbReference type="GO" id="GO:0008237">
    <property type="term" value="F:metallopeptidase activity"/>
    <property type="evidence" value="ECO:0007669"/>
    <property type="project" value="UniProtKB-KW"/>
</dbReference>
<dbReference type="GO" id="GO:0006508">
    <property type="term" value="P:proteolysis"/>
    <property type="evidence" value="ECO:0007669"/>
    <property type="project" value="UniProtKB-KW"/>
</dbReference>
<dbReference type="CDD" id="cd08071">
    <property type="entry name" value="MPN_DUF2466"/>
    <property type="match status" value="1"/>
</dbReference>
<dbReference type="FunFam" id="3.40.140.10:FF:000032">
    <property type="entry name" value="DNA repair protein RadC"/>
    <property type="match status" value="1"/>
</dbReference>
<dbReference type="Gene3D" id="3.40.140.10">
    <property type="entry name" value="Cytidine Deaminase, domain 2"/>
    <property type="match status" value="1"/>
</dbReference>
<dbReference type="InterPro" id="IPR037518">
    <property type="entry name" value="MPN"/>
</dbReference>
<dbReference type="InterPro" id="IPR025657">
    <property type="entry name" value="RadC_JAB"/>
</dbReference>
<dbReference type="InterPro" id="IPR010994">
    <property type="entry name" value="RuvA_2-like"/>
</dbReference>
<dbReference type="InterPro" id="IPR001405">
    <property type="entry name" value="UPF0758"/>
</dbReference>
<dbReference type="InterPro" id="IPR020891">
    <property type="entry name" value="UPF0758_CS"/>
</dbReference>
<dbReference type="InterPro" id="IPR046778">
    <property type="entry name" value="UPF0758_N"/>
</dbReference>
<dbReference type="NCBIfam" id="NF000642">
    <property type="entry name" value="PRK00024.1"/>
    <property type="match status" value="1"/>
</dbReference>
<dbReference type="NCBIfam" id="TIGR00608">
    <property type="entry name" value="radc"/>
    <property type="match status" value="1"/>
</dbReference>
<dbReference type="PANTHER" id="PTHR30471">
    <property type="entry name" value="DNA REPAIR PROTEIN RADC"/>
    <property type="match status" value="1"/>
</dbReference>
<dbReference type="PANTHER" id="PTHR30471:SF3">
    <property type="entry name" value="UPF0758 PROTEIN YEES-RELATED"/>
    <property type="match status" value="1"/>
</dbReference>
<dbReference type="Pfam" id="PF04002">
    <property type="entry name" value="RadC"/>
    <property type="match status" value="1"/>
</dbReference>
<dbReference type="Pfam" id="PF20582">
    <property type="entry name" value="UPF0758_N"/>
    <property type="match status" value="1"/>
</dbReference>
<dbReference type="SUPFAM" id="SSF102712">
    <property type="entry name" value="JAB1/MPN domain"/>
    <property type="match status" value="1"/>
</dbReference>
<dbReference type="SUPFAM" id="SSF47781">
    <property type="entry name" value="RuvA domain 2-like"/>
    <property type="match status" value="1"/>
</dbReference>
<dbReference type="PROSITE" id="PS50249">
    <property type="entry name" value="MPN"/>
    <property type="match status" value="1"/>
</dbReference>
<dbReference type="PROSITE" id="PS01302">
    <property type="entry name" value="UPF0758"/>
    <property type="match status" value="1"/>
</dbReference>
<gene>
    <name type="ordered locus">VS_0182</name>
</gene>
<feature type="chain" id="PRO_1000195315" description="UPF0758 protein VS_0182">
    <location>
        <begin position="1"/>
        <end position="224"/>
    </location>
</feature>
<feature type="domain" description="MPN" evidence="1">
    <location>
        <begin position="102"/>
        <end position="224"/>
    </location>
</feature>
<feature type="region of interest" description="Disordered" evidence="2">
    <location>
        <begin position="1"/>
        <end position="21"/>
    </location>
</feature>
<feature type="short sequence motif" description="JAMM motif" evidence="1">
    <location>
        <begin position="173"/>
        <end position="186"/>
    </location>
</feature>
<feature type="binding site" evidence="1">
    <location>
        <position position="173"/>
    </location>
    <ligand>
        <name>Zn(2+)</name>
        <dbReference type="ChEBI" id="CHEBI:29105"/>
        <note>catalytic</note>
    </ligand>
</feature>
<feature type="binding site" evidence="1">
    <location>
        <position position="175"/>
    </location>
    <ligand>
        <name>Zn(2+)</name>
        <dbReference type="ChEBI" id="CHEBI:29105"/>
        <note>catalytic</note>
    </ligand>
</feature>
<feature type="binding site" evidence="1">
    <location>
        <position position="186"/>
    </location>
    <ligand>
        <name>Zn(2+)</name>
        <dbReference type="ChEBI" id="CHEBI:29105"/>
        <note>catalytic</note>
    </ligand>
</feature>
<proteinExistence type="inferred from homology"/>
<accession>B7VHK2</accession>
<keyword id="KW-0378">Hydrolase</keyword>
<keyword id="KW-0479">Metal-binding</keyword>
<keyword id="KW-0482">Metalloprotease</keyword>
<keyword id="KW-0645">Protease</keyword>
<keyword id="KW-0862">Zinc</keyword>